<reference key="1">
    <citation type="journal article" date="2000" name="Nature">
        <title>Sequence and analysis of chromosome 1 of the plant Arabidopsis thaliana.</title>
        <authorList>
            <person name="Theologis A."/>
            <person name="Ecker J.R."/>
            <person name="Palm C.J."/>
            <person name="Federspiel N.A."/>
            <person name="Kaul S."/>
            <person name="White O."/>
            <person name="Alonso J."/>
            <person name="Altafi H."/>
            <person name="Araujo R."/>
            <person name="Bowman C.L."/>
            <person name="Brooks S.Y."/>
            <person name="Buehler E."/>
            <person name="Chan A."/>
            <person name="Chao Q."/>
            <person name="Chen H."/>
            <person name="Cheuk R.F."/>
            <person name="Chin C.W."/>
            <person name="Chung M.K."/>
            <person name="Conn L."/>
            <person name="Conway A.B."/>
            <person name="Conway A.R."/>
            <person name="Creasy T.H."/>
            <person name="Dewar K."/>
            <person name="Dunn P."/>
            <person name="Etgu P."/>
            <person name="Feldblyum T.V."/>
            <person name="Feng J.-D."/>
            <person name="Fong B."/>
            <person name="Fujii C.Y."/>
            <person name="Gill J.E."/>
            <person name="Goldsmith A.D."/>
            <person name="Haas B."/>
            <person name="Hansen N.F."/>
            <person name="Hughes B."/>
            <person name="Huizar L."/>
            <person name="Hunter J.L."/>
            <person name="Jenkins J."/>
            <person name="Johnson-Hopson C."/>
            <person name="Khan S."/>
            <person name="Khaykin E."/>
            <person name="Kim C.J."/>
            <person name="Koo H.L."/>
            <person name="Kremenetskaia I."/>
            <person name="Kurtz D.B."/>
            <person name="Kwan A."/>
            <person name="Lam B."/>
            <person name="Langin-Hooper S."/>
            <person name="Lee A."/>
            <person name="Lee J.M."/>
            <person name="Lenz C.A."/>
            <person name="Li J.H."/>
            <person name="Li Y.-P."/>
            <person name="Lin X."/>
            <person name="Liu S.X."/>
            <person name="Liu Z.A."/>
            <person name="Luros J.S."/>
            <person name="Maiti R."/>
            <person name="Marziali A."/>
            <person name="Militscher J."/>
            <person name="Miranda M."/>
            <person name="Nguyen M."/>
            <person name="Nierman W.C."/>
            <person name="Osborne B.I."/>
            <person name="Pai G."/>
            <person name="Peterson J."/>
            <person name="Pham P.K."/>
            <person name="Rizzo M."/>
            <person name="Rooney T."/>
            <person name="Rowley D."/>
            <person name="Sakano H."/>
            <person name="Salzberg S.L."/>
            <person name="Schwartz J.R."/>
            <person name="Shinn P."/>
            <person name="Southwick A.M."/>
            <person name="Sun H."/>
            <person name="Tallon L.J."/>
            <person name="Tambunga G."/>
            <person name="Toriumi M.J."/>
            <person name="Town C.D."/>
            <person name="Utterback T."/>
            <person name="Van Aken S."/>
            <person name="Vaysberg M."/>
            <person name="Vysotskaia V.S."/>
            <person name="Walker M."/>
            <person name="Wu D."/>
            <person name="Yu G."/>
            <person name="Fraser C.M."/>
            <person name="Venter J.C."/>
            <person name="Davis R.W."/>
        </authorList>
    </citation>
    <scope>NUCLEOTIDE SEQUENCE [LARGE SCALE GENOMIC DNA]</scope>
    <source>
        <strain>cv. Columbia</strain>
    </source>
</reference>
<reference key="2">
    <citation type="journal article" date="2017" name="Plant J.">
        <title>Araport11: a complete reannotation of the Arabidopsis thaliana reference genome.</title>
        <authorList>
            <person name="Cheng C.Y."/>
            <person name="Krishnakumar V."/>
            <person name="Chan A.P."/>
            <person name="Thibaud-Nissen F."/>
            <person name="Schobel S."/>
            <person name="Town C.D."/>
        </authorList>
    </citation>
    <scope>GENOME REANNOTATION</scope>
    <source>
        <strain>cv. Columbia</strain>
    </source>
</reference>
<dbReference type="EMBL" id="AC079131">
    <property type="protein sequence ID" value="AAG50757.1"/>
    <property type="molecule type" value="Genomic_DNA"/>
</dbReference>
<dbReference type="EMBL" id="AC079604">
    <property type="protein sequence ID" value="AAG50706.1"/>
    <property type="molecule type" value="Genomic_DNA"/>
</dbReference>
<dbReference type="EMBL" id="CP002684">
    <property type="protein sequence ID" value="AEE33496.1"/>
    <property type="molecule type" value="Genomic_DNA"/>
</dbReference>
<dbReference type="PIR" id="B96614">
    <property type="entry name" value="B96614"/>
</dbReference>
<dbReference type="RefSeq" id="NP_176106.1">
    <property type="nucleotide sequence ID" value="NM_104591.1"/>
</dbReference>
<dbReference type="PaxDb" id="3702-AT1G58090.1"/>
<dbReference type="EnsemblPlants" id="AT1G58090.1">
    <property type="protein sequence ID" value="AT1G58090.1"/>
    <property type="gene ID" value="AT1G58090"/>
</dbReference>
<dbReference type="GeneID" id="842176"/>
<dbReference type="Gramene" id="AT1G58090.1">
    <property type="protein sequence ID" value="AT1G58090.1"/>
    <property type="gene ID" value="AT1G58090"/>
</dbReference>
<dbReference type="KEGG" id="ath:AT1G58090"/>
<dbReference type="Araport" id="AT1G58090"/>
<dbReference type="TAIR" id="AT1G58090"/>
<dbReference type="HOGENOM" id="CLU_034692_2_1_1"/>
<dbReference type="InParanoid" id="Q9C6F7"/>
<dbReference type="OMA" id="VTDHTRF"/>
<dbReference type="PhylomeDB" id="Q9C6F7"/>
<dbReference type="PRO" id="PR:Q9C6F7"/>
<dbReference type="Proteomes" id="UP000006548">
    <property type="component" value="Chromosome 1"/>
</dbReference>
<dbReference type="ExpressionAtlas" id="Q9C6F7">
    <property type="expression patterns" value="baseline"/>
</dbReference>
<dbReference type="CDD" id="cd22157">
    <property type="entry name" value="F-box_AtFBW1-like"/>
    <property type="match status" value="1"/>
</dbReference>
<dbReference type="Gene3D" id="1.20.1280.50">
    <property type="match status" value="1"/>
</dbReference>
<dbReference type="InterPro" id="IPR006527">
    <property type="entry name" value="F-box-assoc_dom_typ1"/>
</dbReference>
<dbReference type="InterPro" id="IPR017451">
    <property type="entry name" value="F-box-assoc_interact_dom"/>
</dbReference>
<dbReference type="InterPro" id="IPR036047">
    <property type="entry name" value="F-box-like_dom_sf"/>
</dbReference>
<dbReference type="InterPro" id="IPR001810">
    <property type="entry name" value="F-box_dom"/>
</dbReference>
<dbReference type="InterPro" id="IPR050796">
    <property type="entry name" value="SCF_F-box_component"/>
</dbReference>
<dbReference type="NCBIfam" id="TIGR01640">
    <property type="entry name" value="F_box_assoc_1"/>
    <property type="match status" value="1"/>
</dbReference>
<dbReference type="PANTHER" id="PTHR31672">
    <property type="entry name" value="BNACNNG10540D PROTEIN"/>
    <property type="match status" value="1"/>
</dbReference>
<dbReference type="PANTHER" id="PTHR31672:SF13">
    <property type="entry name" value="F-BOX PROTEIN CPR30-LIKE"/>
    <property type="match status" value="1"/>
</dbReference>
<dbReference type="Pfam" id="PF00646">
    <property type="entry name" value="F-box"/>
    <property type="match status" value="1"/>
</dbReference>
<dbReference type="Pfam" id="PF07734">
    <property type="entry name" value="FBA_1"/>
    <property type="match status" value="1"/>
</dbReference>
<dbReference type="SMART" id="SM00256">
    <property type="entry name" value="FBOX"/>
    <property type="match status" value="1"/>
</dbReference>
<dbReference type="SUPFAM" id="SSF81383">
    <property type="entry name" value="F-box domain"/>
    <property type="match status" value="1"/>
</dbReference>
<dbReference type="PROSITE" id="PS50181">
    <property type="entry name" value="FBOX"/>
    <property type="match status" value="1"/>
</dbReference>
<accession>Q9C6F7</accession>
<accession>Q9C6R6</accession>
<keyword id="KW-1185">Reference proteome</keyword>
<evidence type="ECO:0000255" key="1">
    <source>
        <dbReference type="PROSITE-ProRule" id="PRU00080"/>
    </source>
</evidence>
<feature type="chain" id="PRO_0000283338" description="Putative F-box protein At1g58090">
    <location>
        <begin position="1"/>
        <end position="371"/>
    </location>
</feature>
<feature type="domain" description="F-box" evidence="1">
    <location>
        <begin position="1"/>
        <end position="46"/>
    </location>
</feature>
<protein>
    <recommendedName>
        <fullName>Putative F-box protein At1g58090</fullName>
    </recommendedName>
</protein>
<gene>
    <name type="ordered locus">At1g58090</name>
    <name type="ORF">T15M6.10</name>
    <name type="ORF">T18I24.1</name>
</gene>
<proteinExistence type="predicted"/>
<organism>
    <name type="scientific">Arabidopsis thaliana</name>
    <name type="common">Mouse-ear cress</name>
    <dbReference type="NCBI Taxonomy" id="3702"/>
    <lineage>
        <taxon>Eukaryota</taxon>
        <taxon>Viridiplantae</taxon>
        <taxon>Streptophyta</taxon>
        <taxon>Embryophyta</taxon>
        <taxon>Tracheophyta</taxon>
        <taxon>Spermatophyta</taxon>
        <taxon>Magnoliopsida</taxon>
        <taxon>eudicotyledons</taxon>
        <taxon>Gunneridae</taxon>
        <taxon>Pentapetalae</taxon>
        <taxon>rosids</taxon>
        <taxon>malvids</taxon>
        <taxon>Brassicales</taxon>
        <taxon>Brassicaceae</taxon>
        <taxon>Camelineae</taxon>
        <taxon>Arabidopsis</taxon>
    </lineage>
</organism>
<name>FB64_ARATH</name>
<sequence>MVSKKLPLDLEEEILFRVPPRSLVRFRSVCREWNTLFKNKRFINKNFACGRPEIMLNTHSHIYSISVDLKDENPTIKVRDLRFDHLSCRGYHLYGICDGNFFMYSFLNGGGGVVWNPLFWRQTKWIAKAENTCGKAIGYDGSRPEKSYKIIGRSSCSWQGKVTDTYSVFEFATNAWKVTDHTRFHEKPELMDDSGRVSLNGNLYWTAYNSPHTGQYFIAMLDFSKEIEKSRKTFCVLPCKGEKSTTHTRILSIYKGDRFSVLEQSKKTREIEIWVTKDQIGNGDDGDDVVWIKFMTVSRPDFPILLSYISTSYFVDNDIHGKSFVLCCPSKRPKAAWVYIVRGDLCKKIKIDQVLCEFQSSVYVPSLITIP</sequence>